<feature type="chain" id="PRO_0000177824" description="D-alanine--D-alanine ligase">
    <location>
        <begin position="1"/>
        <end position="287"/>
    </location>
</feature>
<feature type="domain" description="ATP-grasp" evidence="2">
    <location>
        <begin position="98"/>
        <end position="283"/>
    </location>
</feature>
<feature type="binding site" evidence="2">
    <location>
        <begin position="124"/>
        <end position="169"/>
    </location>
    <ligand>
        <name>ATP</name>
        <dbReference type="ChEBI" id="CHEBI:30616"/>
    </ligand>
</feature>
<feature type="binding site" evidence="2">
    <location>
        <position position="238"/>
    </location>
    <ligand>
        <name>Mg(2+)</name>
        <dbReference type="ChEBI" id="CHEBI:18420"/>
        <label>1</label>
    </ligand>
</feature>
<feature type="binding site" evidence="2">
    <location>
        <position position="250"/>
    </location>
    <ligand>
        <name>Mg(2+)</name>
        <dbReference type="ChEBI" id="CHEBI:18420"/>
        <label>1</label>
    </ligand>
</feature>
<feature type="binding site" evidence="2">
    <location>
        <position position="250"/>
    </location>
    <ligand>
        <name>Mg(2+)</name>
        <dbReference type="ChEBI" id="CHEBI:18420"/>
        <label>2</label>
    </ligand>
</feature>
<feature type="binding site" evidence="2">
    <location>
        <position position="252"/>
    </location>
    <ligand>
        <name>Mg(2+)</name>
        <dbReference type="ChEBI" id="CHEBI:18420"/>
        <label>2</label>
    </ligand>
</feature>
<gene>
    <name evidence="2" type="primary">ddl</name>
    <name type="ordered locus">FN1454</name>
</gene>
<comment type="function">
    <text evidence="2">Cell wall formation.</text>
</comment>
<comment type="catalytic activity">
    <reaction evidence="2">
        <text>2 D-alanine + ATP = D-alanyl-D-alanine + ADP + phosphate + H(+)</text>
        <dbReference type="Rhea" id="RHEA:11224"/>
        <dbReference type="ChEBI" id="CHEBI:15378"/>
        <dbReference type="ChEBI" id="CHEBI:30616"/>
        <dbReference type="ChEBI" id="CHEBI:43474"/>
        <dbReference type="ChEBI" id="CHEBI:57416"/>
        <dbReference type="ChEBI" id="CHEBI:57822"/>
        <dbReference type="ChEBI" id="CHEBI:456216"/>
        <dbReference type="EC" id="6.3.2.4"/>
    </reaction>
</comment>
<comment type="cofactor">
    <cofactor evidence="1">
        <name>Mg(2+)</name>
        <dbReference type="ChEBI" id="CHEBI:18420"/>
    </cofactor>
    <cofactor evidence="1">
        <name>Mn(2+)</name>
        <dbReference type="ChEBI" id="CHEBI:29035"/>
    </cofactor>
    <text evidence="1">Binds 2 magnesium or manganese ions per subunit.</text>
</comment>
<comment type="pathway">
    <text evidence="2">Cell wall biogenesis; peptidoglycan biosynthesis.</text>
</comment>
<comment type="subcellular location">
    <subcellularLocation>
        <location evidence="2">Cytoplasm</location>
    </subcellularLocation>
</comment>
<comment type="similarity">
    <text evidence="2">Belongs to the D-alanine--D-alanine ligase family.</text>
</comment>
<sequence length="287" mass="31483">MRIAVFMGGTSSEKEISLKSGEAVLESLQKQGYDAYGVILDERNQVSAFVDNDYDLAYLVLHGGNGENGKIQAVLDILGKKYTGSGVLASAITMDKDKTKQIAQSVGIKTPKSYRPVEEIERFPVIIKPVDEGSSKGLFLCNNKEEAEEAVKKLAKPIIEDYIIGEELTVGVLNGEALGVLKIIPQADVLYDYDSKYAKGGSVHEFPAKIENKSYKEAMKIAEKIHSEFGMKGISRSDFILSEGELYFLEVNSSPGMTKTSLIPDLATLKGYSFDDVVRITVETFLE</sequence>
<accession>Q8RDQ4</accession>
<proteinExistence type="inferred from homology"/>
<keyword id="KW-0067">ATP-binding</keyword>
<keyword id="KW-0133">Cell shape</keyword>
<keyword id="KW-0961">Cell wall biogenesis/degradation</keyword>
<keyword id="KW-0963">Cytoplasm</keyword>
<keyword id="KW-0436">Ligase</keyword>
<keyword id="KW-0460">Magnesium</keyword>
<keyword id="KW-0464">Manganese</keyword>
<keyword id="KW-0479">Metal-binding</keyword>
<keyword id="KW-0547">Nucleotide-binding</keyword>
<keyword id="KW-0573">Peptidoglycan synthesis</keyword>
<keyword id="KW-1185">Reference proteome</keyword>
<reference key="1">
    <citation type="journal article" date="2002" name="J. Bacteriol.">
        <title>Genome sequence and analysis of the oral bacterium Fusobacterium nucleatum strain ATCC 25586.</title>
        <authorList>
            <person name="Kapatral V."/>
            <person name="Anderson I."/>
            <person name="Ivanova N."/>
            <person name="Reznik G."/>
            <person name="Los T."/>
            <person name="Lykidis A."/>
            <person name="Bhattacharyya A."/>
            <person name="Bartman A."/>
            <person name="Gardner W."/>
            <person name="Grechkin G."/>
            <person name="Zhu L."/>
            <person name="Vasieva O."/>
            <person name="Chu L."/>
            <person name="Kogan Y."/>
            <person name="Chaga O."/>
            <person name="Goltsman E."/>
            <person name="Bernal A."/>
            <person name="Larsen N."/>
            <person name="D'Souza M."/>
            <person name="Walunas T."/>
            <person name="Pusch G."/>
            <person name="Haselkorn R."/>
            <person name="Fonstein M."/>
            <person name="Kyrpides N.C."/>
            <person name="Overbeek R."/>
        </authorList>
    </citation>
    <scope>NUCLEOTIDE SEQUENCE [LARGE SCALE GENOMIC DNA]</scope>
    <source>
        <strain>ATCC 25586 / DSM 15643 / BCRC 10681 / CIP 101130 / JCM 8532 / KCTC 2640 / LMG 13131 / VPI 4355</strain>
    </source>
</reference>
<name>DDL_FUSNN</name>
<dbReference type="EC" id="6.3.2.4" evidence="2"/>
<dbReference type="EMBL" id="AE009951">
    <property type="protein sequence ID" value="AAL95647.1"/>
    <property type="molecule type" value="Genomic_DNA"/>
</dbReference>
<dbReference type="RefSeq" id="NP_604348.1">
    <property type="nucleotide sequence ID" value="NC_003454.1"/>
</dbReference>
<dbReference type="SMR" id="Q8RDQ4"/>
<dbReference type="FunCoup" id="Q8RDQ4">
    <property type="interactions" value="246"/>
</dbReference>
<dbReference type="STRING" id="190304.FN1454"/>
<dbReference type="PaxDb" id="190304-FN1454"/>
<dbReference type="EnsemblBacteria" id="AAL95647">
    <property type="protein sequence ID" value="AAL95647"/>
    <property type="gene ID" value="FN1454"/>
</dbReference>
<dbReference type="KEGG" id="fnu:FN1454"/>
<dbReference type="PATRIC" id="fig|190304.8.peg.2014"/>
<dbReference type="eggNOG" id="COG1181">
    <property type="taxonomic scope" value="Bacteria"/>
</dbReference>
<dbReference type="HOGENOM" id="CLU_039268_1_1_0"/>
<dbReference type="InParanoid" id="Q8RDQ4"/>
<dbReference type="BioCyc" id="FNUC190304:G1FZS-2023-MONOMER"/>
<dbReference type="UniPathway" id="UPA00219"/>
<dbReference type="Proteomes" id="UP000002521">
    <property type="component" value="Chromosome"/>
</dbReference>
<dbReference type="GO" id="GO:0005737">
    <property type="term" value="C:cytoplasm"/>
    <property type="evidence" value="ECO:0007669"/>
    <property type="project" value="UniProtKB-SubCell"/>
</dbReference>
<dbReference type="GO" id="GO:0005524">
    <property type="term" value="F:ATP binding"/>
    <property type="evidence" value="ECO:0007669"/>
    <property type="project" value="UniProtKB-KW"/>
</dbReference>
<dbReference type="GO" id="GO:0008716">
    <property type="term" value="F:D-alanine-D-alanine ligase activity"/>
    <property type="evidence" value="ECO:0000318"/>
    <property type="project" value="GO_Central"/>
</dbReference>
<dbReference type="GO" id="GO:0046872">
    <property type="term" value="F:metal ion binding"/>
    <property type="evidence" value="ECO:0007669"/>
    <property type="project" value="UniProtKB-KW"/>
</dbReference>
<dbReference type="GO" id="GO:0071555">
    <property type="term" value="P:cell wall organization"/>
    <property type="evidence" value="ECO:0007669"/>
    <property type="project" value="UniProtKB-KW"/>
</dbReference>
<dbReference type="GO" id="GO:0009252">
    <property type="term" value="P:peptidoglycan biosynthetic process"/>
    <property type="evidence" value="ECO:0007669"/>
    <property type="project" value="UniProtKB-UniRule"/>
</dbReference>
<dbReference type="GO" id="GO:0008360">
    <property type="term" value="P:regulation of cell shape"/>
    <property type="evidence" value="ECO:0007669"/>
    <property type="project" value="UniProtKB-KW"/>
</dbReference>
<dbReference type="Gene3D" id="3.40.50.20">
    <property type="match status" value="1"/>
</dbReference>
<dbReference type="Gene3D" id="3.30.1490.20">
    <property type="entry name" value="ATP-grasp fold, A domain"/>
    <property type="match status" value="1"/>
</dbReference>
<dbReference type="Gene3D" id="3.30.470.20">
    <property type="entry name" value="ATP-grasp fold, B domain"/>
    <property type="match status" value="1"/>
</dbReference>
<dbReference type="HAMAP" id="MF_00047">
    <property type="entry name" value="Dala_Dala_lig"/>
    <property type="match status" value="1"/>
</dbReference>
<dbReference type="InterPro" id="IPR011761">
    <property type="entry name" value="ATP-grasp"/>
</dbReference>
<dbReference type="InterPro" id="IPR013815">
    <property type="entry name" value="ATP_grasp_subdomain_1"/>
</dbReference>
<dbReference type="InterPro" id="IPR000291">
    <property type="entry name" value="D-Ala_lig_Van_CS"/>
</dbReference>
<dbReference type="InterPro" id="IPR005905">
    <property type="entry name" value="D_ala_D_ala"/>
</dbReference>
<dbReference type="InterPro" id="IPR011095">
    <property type="entry name" value="Dala_Dala_lig_C"/>
</dbReference>
<dbReference type="InterPro" id="IPR011127">
    <property type="entry name" value="Dala_Dala_lig_N"/>
</dbReference>
<dbReference type="InterPro" id="IPR016185">
    <property type="entry name" value="PreATP-grasp_dom_sf"/>
</dbReference>
<dbReference type="NCBIfam" id="TIGR01205">
    <property type="entry name" value="D_ala_D_alaTIGR"/>
    <property type="match status" value="1"/>
</dbReference>
<dbReference type="NCBIfam" id="NF002378">
    <property type="entry name" value="PRK01372.1"/>
    <property type="match status" value="1"/>
</dbReference>
<dbReference type="PANTHER" id="PTHR23132">
    <property type="entry name" value="D-ALANINE--D-ALANINE LIGASE"/>
    <property type="match status" value="1"/>
</dbReference>
<dbReference type="PANTHER" id="PTHR23132:SF23">
    <property type="entry name" value="D-ALANINE--D-ALANINE LIGASE B"/>
    <property type="match status" value="1"/>
</dbReference>
<dbReference type="Pfam" id="PF07478">
    <property type="entry name" value="Dala_Dala_lig_C"/>
    <property type="match status" value="1"/>
</dbReference>
<dbReference type="Pfam" id="PF01820">
    <property type="entry name" value="Dala_Dala_lig_N"/>
    <property type="match status" value="1"/>
</dbReference>
<dbReference type="PIRSF" id="PIRSF039102">
    <property type="entry name" value="Ddl/VanB"/>
    <property type="match status" value="1"/>
</dbReference>
<dbReference type="SUPFAM" id="SSF56059">
    <property type="entry name" value="Glutathione synthetase ATP-binding domain-like"/>
    <property type="match status" value="1"/>
</dbReference>
<dbReference type="SUPFAM" id="SSF52440">
    <property type="entry name" value="PreATP-grasp domain"/>
    <property type="match status" value="1"/>
</dbReference>
<dbReference type="PROSITE" id="PS50975">
    <property type="entry name" value="ATP_GRASP"/>
    <property type="match status" value="1"/>
</dbReference>
<dbReference type="PROSITE" id="PS00843">
    <property type="entry name" value="DALA_DALA_LIGASE_1"/>
    <property type="match status" value="1"/>
</dbReference>
<dbReference type="PROSITE" id="PS00844">
    <property type="entry name" value="DALA_DALA_LIGASE_2"/>
    <property type="match status" value="1"/>
</dbReference>
<evidence type="ECO:0000250" key="1"/>
<evidence type="ECO:0000255" key="2">
    <source>
        <dbReference type="HAMAP-Rule" id="MF_00047"/>
    </source>
</evidence>
<protein>
    <recommendedName>
        <fullName evidence="2">D-alanine--D-alanine ligase</fullName>
        <ecNumber evidence="2">6.3.2.4</ecNumber>
    </recommendedName>
    <alternativeName>
        <fullName evidence="2">D-Ala-D-Ala ligase</fullName>
    </alternativeName>
    <alternativeName>
        <fullName evidence="2">D-alanylalanine synthetase</fullName>
    </alternativeName>
</protein>
<organism>
    <name type="scientific">Fusobacterium nucleatum subsp. nucleatum (strain ATCC 25586 / DSM 15643 / BCRC 10681 / CIP 101130 / JCM 8532 / KCTC 2640 / LMG 13131 / VPI 4355)</name>
    <dbReference type="NCBI Taxonomy" id="190304"/>
    <lineage>
        <taxon>Bacteria</taxon>
        <taxon>Fusobacteriati</taxon>
        <taxon>Fusobacteriota</taxon>
        <taxon>Fusobacteriia</taxon>
        <taxon>Fusobacteriales</taxon>
        <taxon>Fusobacteriaceae</taxon>
        <taxon>Fusobacterium</taxon>
    </lineage>
</organism>